<evidence type="ECO:0000255" key="1">
    <source>
        <dbReference type="HAMAP-Rule" id="MF_01322"/>
    </source>
</evidence>
<reference key="1">
    <citation type="journal article" date="2007" name="J. Bacteriol.">
        <title>Genome sequence and analysis of the soil cellulolytic actinomycete Thermobifida fusca YX.</title>
        <authorList>
            <person name="Lykidis A."/>
            <person name="Mavromatis K."/>
            <person name="Ivanova N."/>
            <person name="Anderson I."/>
            <person name="Land M."/>
            <person name="DiBartolo G."/>
            <person name="Martinez M."/>
            <person name="Lapidus A."/>
            <person name="Lucas S."/>
            <person name="Copeland A."/>
            <person name="Richardson P."/>
            <person name="Wilson D.B."/>
            <person name="Kyrpides N."/>
        </authorList>
    </citation>
    <scope>NUCLEOTIDE SEQUENCE [LARGE SCALE GENOMIC DNA]</scope>
    <source>
        <strain>YX</strain>
    </source>
</reference>
<protein>
    <recommendedName>
        <fullName evidence="1">DNA-directed RNA polymerase subunit beta'</fullName>
        <shortName evidence="1">RNAP subunit beta'</shortName>
        <ecNumber evidence="1">2.7.7.6</ecNumber>
    </recommendedName>
    <alternativeName>
        <fullName evidence="1">RNA polymerase subunit beta'</fullName>
    </alternativeName>
    <alternativeName>
        <fullName evidence="1">Transcriptase subunit beta'</fullName>
    </alternativeName>
</protein>
<gene>
    <name evidence="1" type="primary">rpoC</name>
    <name type="ordered locus">Tfu_2653</name>
</gene>
<organism>
    <name type="scientific">Thermobifida fusca (strain YX)</name>
    <dbReference type="NCBI Taxonomy" id="269800"/>
    <lineage>
        <taxon>Bacteria</taxon>
        <taxon>Bacillati</taxon>
        <taxon>Actinomycetota</taxon>
        <taxon>Actinomycetes</taxon>
        <taxon>Streptosporangiales</taxon>
        <taxon>Nocardiopsidaceae</taxon>
        <taxon>Thermobifida</taxon>
    </lineage>
</organism>
<sequence>MLDVNFFDELRIGLATADDIRQWSHGEVKKPETINYRTLKPEKDGLFCEKIFGPTRDWECYCGKYKRVRFKGIICERCGVEVTRAKVRRERMGHIELAAPVTHIWYFKGVPSRLGYLLDLAPKDLEKVIYFAAYMVTWVDTEARERDLPSLEAQISVERQHLEQRRDSAIEERHRKLEADLAELEEQGAKADARRKVREAAEREIRQIRDRAQREIDRLEEVWNRFKNLKVQDLEGDEQLYREMRDRFGKYFRGGMGAQAIKERLANFDLEAEAEKLREIIRTGKGQKKARALKRLKVVSAFLNTRNSPMGMVLDCVPVIPPDLRPMVQLDGGRFATSDLNDLYRRVINRNNRLKRLLDLGAPEIIVNNEKRMLQEAVDALFDNGRRGRPVTGPGNRPLKSLSDMLKGKQGRFRQNLLGKRVDYSGRSVIVVGPQLKLHQCGLPKQMALELFKPFVMKRLVDLNHAQNIKSAKRMVERARPVVWDVLEEVISEHPVLLNRAPTLHRLGIQAFEPQLVEGKAIQIHPLVCTAFNADFDGDQMAVHLPLSAEAQAEARILMLATNNILKPSDGKPVTMPTQDMVIGLYYLTTMKEGAKGEGRAFSNIGEAIMAYDLGELDLQAKIKLRVEGDTVPPVNWEPPEDYQPGQPYILETTLGRYLFNETTPEDYPFVNQQMGKKQLSALVTELAEKYSKVQVATTLDALKDAGYYWATRSGLTISISDVIPPPNKQQILDKYEQQAQKIQRQYERGLISDDERRQELIHIWTKATDEVAKDMEENSPPDNPVWMMVNSGSRGNPLQVRQIAAIRGLVSNTKGETIPRPIKSSYREGLTVLEYFISTHGQRKGLADTALRTADSGYLTRRLVDVAQDVIVREVDCGTDRFLWQEIGERRPDGTIVRKHNVENTGFGRTLAEDVVVDGKVIATKLSDTTEALIDKLLAAGVTRIRIRSALVCESKIGVCATCYGRSLATGKPVDVGEAVGIIAAQSIGEPGTQLTMRTFHMGGTAGQDITHGLPRVQELFEARVPKGVAPISEVEGRVRIEETDKSRKIIVVPDDGSDEVSYQVPMRAPLLVQDGQRVEVGQQLVQGTVNPHEILRILGPRAVQQHLVSEVQEVYKSQGVSIHDKHIEIIVRQMLKRVNVLESGDTKLLPGEMIERPKFEEINRRVVAEGGQPASARPVLLGITKASLATESWLSAASFQETTRVLTENAIHGKSDPLLGLKENVIIGKLIPAGTGMPQYRNIRVEPTEEAKASMYSVSSYEEPSEYTFGQGSGEAVPLEDYDFGSYNR</sequence>
<comment type="function">
    <text evidence="1">DNA-dependent RNA polymerase catalyzes the transcription of DNA into RNA using the four ribonucleoside triphosphates as substrates.</text>
</comment>
<comment type="catalytic activity">
    <reaction evidence="1">
        <text>RNA(n) + a ribonucleoside 5'-triphosphate = RNA(n+1) + diphosphate</text>
        <dbReference type="Rhea" id="RHEA:21248"/>
        <dbReference type="Rhea" id="RHEA-COMP:14527"/>
        <dbReference type="Rhea" id="RHEA-COMP:17342"/>
        <dbReference type="ChEBI" id="CHEBI:33019"/>
        <dbReference type="ChEBI" id="CHEBI:61557"/>
        <dbReference type="ChEBI" id="CHEBI:140395"/>
        <dbReference type="EC" id="2.7.7.6"/>
    </reaction>
</comment>
<comment type="cofactor">
    <cofactor evidence="1">
        <name>Mg(2+)</name>
        <dbReference type="ChEBI" id="CHEBI:18420"/>
    </cofactor>
    <text evidence="1">Binds 1 Mg(2+) ion per subunit.</text>
</comment>
<comment type="cofactor">
    <cofactor evidence="1">
        <name>Zn(2+)</name>
        <dbReference type="ChEBI" id="CHEBI:29105"/>
    </cofactor>
    <text evidence="1">Binds 2 Zn(2+) ions per subunit.</text>
</comment>
<comment type="subunit">
    <text evidence="1">The RNAP catalytic core consists of 2 alpha, 1 beta, 1 beta' and 1 omega subunit. When a sigma factor is associated with the core the holoenzyme is formed, which can initiate transcription.</text>
</comment>
<comment type="similarity">
    <text evidence="1">Belongs to the RNA polymerase beta' chain family.</text>
</comment>
<accession>Q47LI6</accession>
<proteinExistence type="inferred from homology"/>
<feature type="chain" id="PRO_0000225584" description="DNA-directed RNA polymerase subunit beta'">
    <location>
        <begin position="1"/>
        <end position="1291"/>
    </location>
</feature>
<feature type="binding site" evidence="1">
    <location>
        <position position="60"/>
    </location>
    <ligand>
        <name>Zn(2+)</name>
        <dbReference type="ChEBI" id="CHEBI:29105"/>
        <label>1</label>
    </ligand>
</feature>
<feature type="binding site" evidence="1">
    <location>
        <position position="62"/>
    </location>
    <ligand>
        <name>Zn(2+)</name>
        <dbReference type="ChEBI" id="CHEBI:29105"/>
        <label>1</label>
    </ligand>
</feature>
<feature type="binding site" evidence="1">
    <location>
        <position position="75"/>
    </location>
    <ligand>
        <name>Zn(2+)</name>
        <dbReference type="ChEBI" id="CHEBI:29105"/>
        <label>1</label>
    </ligand>
</feature>
<feature type="binding site" evidence="1">
    <location>
        <position position="78"/>
    </location>
    <ligand>
        <name>Zn(2+)</name>
        <dbReference type="ChEBI" id="CHEBI:29105"/>
        <label>1</label>
    </ligand>
</feature>
<feature type="binding site" evidence="1">
    <location>
        <position position="535"/>
    </location>
    <ligand>
        <name>Mg(2+)</name>
        <dbReference type="ChEBI" id="CHEBI:18420"/>
    </ligand>
</feature>
<feature type="binding site" evidence="1">
    <location>
        <position position="537"/>
    </location>
    <ligand>
        <name>Mg(2+)</name>
        <dbReference type="ChEBI" id="CHEBI:18420"/>
    </ligand>
</feature>
<feature type="binding site" evidence="1">
    <location>
        <position position="539"/>
    </location>
    <ligand>
        <name>Mg(2+)</name>
        <dbReference type="ChEBI" id="CHEBI:18420"/>
    </ligand>
</feature>
<feature type="binding site" evidence="1">
    <location>
        <position position="878"/>
    </location>
    <ligand>
        <name>Zn(2+)</name>
        <dbReference type="ChEBI" id="CHEBI:29105"/>
        <label>2</label>
    </ligand>
</feature>
<feature type="binding site" evidence="1">
    <location>
        <position position="954"/>
    </location>
    <ligand>
        <name>Zn(2+)</name>
        <dbReference type="ChEBI" id="CHEBI:29105"/>
        <label>2</label>
    </ligand>
</feature>
<feature type="binding site" evidence="1">
    <location>
        <position position="961"/>
    </location>
    <ligand>
        <name>Zn(2+)</name>
        <dbReference type="ChEBI" id="CHEBI:29105"/>
        <label>2</label>
    </ligand>
</feature>
<feature type="binding site" evidence="1">
    <location>
        <position position="964"/>
    </location>
    <ligand>
        <name>Zn(2+)</name>
        <dbReference type="ChEBI" id="CHEBI:29105"/>
        <label>2</label>
    </ligand>
</feature>
<name>RPOC_THEFY</name>
<keyword id="KW-0240">DNA-directed RNA polymerase</keyword>
<keyword id="KW-0460">Magnesium</keyword>
<keyword id="KW-0479">Metal-binding</keyword>
<keyword id="KW-0548">Nucleotidyltransferase</keyword>
<keyword id="KW-0804">Transcription</keyword>
<keyword id="KW-0808">Transferase</keyword>
<keyword id="KW-0862">Zinc</keyword>
<dbReference type="EC" id="2.7.7.6" evidence="1"/>
<dbReference type="EMBL" id="CP000088">
    <property type="protein sequence ID" value="AAZ56686.1"/>
    <property type="molecule type" value="Genomic_DNA"/>
</dbReference>
<dbReference type="RefSeq" id="WP_011293076.1">
    <property type="nucleotide sequence ID" value="NC_007333.1"/>
</dbReference>
<dbReference type="SMR" id="Q47LI6"/>
<dbReference type="STRING" id="269800.Tfu_2653"/>
<dbReference type="KEGG" id="tfu:Tfu_2653"/>
<dbReference type="eggNOG" id="COG0086">
    <property type="taxonomic scope" value="Bacteria"/>
</dbReference>
<dbReference type="HOGENOM" id="CLU_000524_3_0_11"/>
<dbReference type="OrthoDB" id="9815296at2"/>
<dbReference type="GO" id="GO:0000428">
    <property type="term" value="C:DNA-directed RNA polymerase complex"/>
    <property type="evidence" value="ECO:0007669"/>
    <property type="project" value="UniProtKB-KW"/>
</dbReference>
<dbReference type="GO" id="GO:0003677">
    <property type="term" value="F:DNA binding"/>
    <property type="evidence" value="ECO:0007669"/>
    <property type="project" value="UniProtKB-UniRule"/>
</dbReference>
<dbReference type="GO" id="GO:0003899">
    <property type="term" value="F:DNA-directed RNA polymerase activity"/>
    <property type="evidence" value="ECO:0007669"/>
    <property type="project" value="UniProtKB-UniRule"/>
</dbReference>
<dbReference type="GO" id="GO:0000287">
    <property type="term" value="F:magnesium ion binding"/>
    <property type="evidence" value="ECO:0007669"/>
    <property type="project" value="UniProtKB-UniRule"/>
</dbReference>
<dbReference type="GO" id="GO:0008270">
    <property type="term" value="F:zinc ion binding"/>
    <property type="evidence" value="ECO:0007669"/>
    <property type="project" value="UniProtKB-UniRule"/>
</dbReference>
<dbReference type="GO" id="GO:0006351">
    <property type="term" value="P:DNA-templated transcription"/>
    <property type="evidence" value="ECO:0007669"/>
    <property type="project" value="UniProtKB-UniRule"/>
</dbReference>
<dbReference type="CDD" id="cd02655">
    <property type="entry name" value="RNAP_beta'_C"/>
    <property type="match status" value="1"/>
</dbReference>
<dbReference type="CDD" id="cd01609">
    <property type="entry name" value="RNAP_beta'_N"/>
    <property type="match status" value="1"/>
</dbReference>
<dbReference type="FunFam" id="1.10.150.390:FF:000002">
    <property type="entry name" value="DNA-directed RNA polymerase subunit beta"/>
    <property type="match status" value="1"/>
</dbReference>
<dbReference type="FunFam" id="1.10.40.90:FF:000001">
    <property type="entry name" value="DNA-directed RNA polymerase subunit beta"/>
    <property type="match status" value="1"/>
</dbReference>
<dbReference type="FunFam" id="4.10.860.120:FF:000001">
    <property type="entry name" value="DNA-directed RNA polymerase subunit beta"/>
    <property type="match status" value="1"/>
</dbReference>
<dbReference type="Gene3D" id="1.10.132.30">
    <property type="match status" value="1"/>
</dbReference>
<dbReference type="Gene3D" id="1.10.150.390">
    <property type="match status" value="1"/>
</dbReference>
<dbReference type="Gene3D" id="1.10.1790.20">
    <property type="match status" value="1"/>
</dbReference>
<dbReference type="Gene3D" id="1.10.40.90">
    <property type="match status" value="1"/>
</dbReference>
<dbReference type="Gene3D" id="2.40.40.20">
    <property type="match status" value="1"/>
</dbReference>
<dbReference type="Gene3D" id="2.40.50.100">
    <property type="match status" value="1"/>
</dbReference>
<dbReference type="Gene3D" id="4.10.860.120">
    <property type="entry name" value="RNA polymerase II, clamp domain"/>
    <property type="match status" value="1"/>
</dbReference>
<dbReference type="Gene3D" id="1.10.274.100">
    <property type="entry name" value="RNA polymerase Rpb1, domain 3"/>
    <property type="match status" value="1"/>
</dbReference>
<dbReference type="HAMAP" id="MF_01322">
    <property type="entry name" value="RNApol_bact_RpoC"/>
    <property type="match status" value="1"/>
</dbReference>
<dbReference type="InterPro" id="IPR045867">
    <property type="entry name" value="DNA-dir_RpoC_beta_prime"/>
</dbReference>
<dbReference type="InterPro" id="IPR012754">
    <property type="entry name" value="DNA-dir_RpoC_beta_prime_bact"/>
</dbReference>
<dbReference type="InterPro" id="IPR000722">
    <property type="entry name" value="RNA_pol_asu"/>
</dbReference>
<dbReference type="InterPro" id="IPR006592">
    <property type="entry name" value="RNA_pol_N"/>
</dbReference>
<dbReference type="InterPro" id="IPR007080">
    <property type="entry name" value="RNA_pol_Rpb1_1"/>
</dbReference>
<dbReference type="InterPro" id="IPR007066">
    <property type="entry name" value="RNA_pol_Rpb1_3"/>
</dbReference>
<dbReference type="InterPro" id="IPR042102">
    <property type="entry name" value="RNA_pol_Rpb1_3_sf"/>
</dbReference>
<dbReference type="InterPro" id="IPR007083">
    <property type="entry name" value="RNA_pol_Rpb1_4"/>
</dbReference>
<dbReference type="InterPro" id="IPR007081">
    <property type="entry name" value="RNA_pol_Rpb1_5"/>
</dbReference>
<dbReference type="InterPro" id="IPR044893">
    <property type="entry name" value="RNA_pol_Rpb1_clamp_domain"/>
</dbReference>
<dbReference type="InterPro" id="IPR038120">
    <property type="entry name" value="Rpb1_funnel_sf"/>
</dbReference>
<dbReference type="NCBIfam" id="NF011498">
    <property type="entry name" value="PRK14906.1"/>
    <property type="match status" value="1"/>
</dbReference>
<dbReference type="NCBIfam" id="TIGR02386">
    <property type="entry name" value="rpoC_TIGR"/>
    <property type="match status" value="1"/>
</dbReference>
<dbReference type="PANTHER" id="PTHR19376">
    <property type="entry name" value="DNA-DIRECTED RNA POLYMERASE"/>
    <property type="match status" value="1"/>
</dbReference>
<dbReference type="PANTHER" id="PTHR19376:SF54">
    <property type="entry name" value="DNA-DIRECTED RNA POLYMERASE SUBUNIT BETA"/>
    <property type="match status" value="1"/>
</dbReference>
<dbReference type="Pfam" id="PF04997">
    <property type="entry name" value="RNA_pol_Rpb1_1"/>
    <property type="match status" value="1"/>
</dbReference>
<dbReference type="Pfam" id="PF00623">
    <property type="entry name" value="RNA_pol_Rpb1_2"/>
    <property type="match status" value="2"/>
</dbReference>
<dbReference type="Pfam" id="PF04983">
    <property type="entry name" value="RNA_pol_Rpb1_3"/>
    <property type="match status" value="1"/>
</dbReference>
<dbReference type="Pfam" id="PF05000">
    <property type="entry name" value="RNA_pol_Rpb1_4"/>
    <property type="match status" value="1"/>
</dbReference>
<dbReference type="Pfam" id="PF04998">
    <property type="entry name" value="RNA_pol_Rpb1_5"/>
    <property type="match status" value="1"/>
</dbReference>
<dbReference type="SMART" id="SM00663">
    <property type="entry name" value="RPOLA_N"/>
    <property type="match status" value="1"/>
</dbReference>
<dbReference type="SUPFAM" id="SSF64484">
    <property type="entry name" value="beta and beta-prime subunits of DNA dependent RNA-polymerase"/>
    <property type="match status" value="1"/>
</dbReference>